<dbReference type="EMBL" id="AP009152">
    <property type="protein sequence ID" value="BAG30684.1"/>
    <property type="molecule type" value="Genomic_DNA"/>
</dbReference>
<dbReference type="RefSeq" id="WP_012399405.1">
    <property type="nucleotide sequence ID" value="NZ_VECX01000003.1"/>
</dbReference>
<dbReference type="SMR" id="B2GJD6"/>
<dbReference type="STRING" id="378753.KRH_23370"/>
<dbReference type="GeneID" id="93241651"/>
<dbReference type="KEGG" id="krh:KRH_23370"/>
<dbReference type="eggNOG" id="COG0238">
    <property type="taxonomic scope" value="Bacteria"/>
</dbReference>
<dbReference type="HOGENOM" id="CLU_148710_1_0_11"/>
<dbReference type="OrthoDB" id="9812008at2"/>
<dbReference type="Proteomes" id="UP000008838">
    <property type="component" value="Chromosome"/>
</dbReference>
<dbReference type="GO" id="GO:0022627">
    <property type="term" value="C:cytosolic small ribosomal subunit"/>
    <property type="evidence" value="ECO:0007669"/>
    <property type="project" value="TreeGrafter"/>
</dbReference>
<dbReference type="GO" id="GO:0070181">
    <property type="term" value="F:small ribosomal subunit rRNA binding"/>
    <property type="evidence" value="ECO:0007669"/>
    <property type="project" value="TreeGrafter"/>
</dbReference>
<dbReference type="GO" id="GO:0003735">
    <property type="term" value="F:structural constituent of ribosome"/>
    <property type="evidence" value="ECO:0007669"/>
    <property type="project" value="InterPro"/>
</dbReference>
<dbReference type="GO" id="GO:0006412">
    <property type="term" value="P:translation"/>
    <property type="evidence" value="ECO:0007669"/>
    <property type="project" value="UniProtKB-UniRule"/>
</dbReference>
<dbReference type="Gene3D" id="4.10.640.10">
    <property type="entry name" value="Ribosomal protein S18"/>
    <property type="match status" value="1"/>
</dbReference>
<dbReference type="HAMAP" id="MF_00270">
    <property type="entry name" value="Ribosomal_bS18"/>
    <property type="match status" value="1"/>
</dbReference>
<dbReference type="InterPro" id="IPR001648">
    <property type="entry name" value="Ribosomal_bS18"/>
</dbReference>
<dbReference type="InterPro" id="IPR018275">
    <property type="entry name" value="Ribosomal_bS18_CS"/>
</dbReference>
<dbReference type="InterPro" id="IPR036870">
    <property type="entry name" value="Ribosomal_bS18_sf"/>
</dbReference>
<dbReference type="NCBIfam" id="TIGR00165">
    <property type="entry name" value="S18"/>
    <property type="match status" value="1"/>
</dbReference>
<dbReference type="PANTHER" id="PTHR13479">
    <property type="entry name" value="30S RIBOSOMAL PROTEIN S18"/>
    <property type="match status" value="1"/>
</dbReference>
<dbReference type="PANTHER" id="PTHR13479:SF40">
    <property type="entry name" value="SMALL RIBOSOMAL SUBUNIT PROTEIN BS18M"/>
    <property type="match status" value="1"/>
</dbReference>
<dbReference type="Pfam" id="PF01084">
    <property type="entry name" value="Ribosomal_S18"/>
    <property type="match status" value="1"/>
</dbReference>
<dbReference type="PRINTS" id="PR00974">
    <property type="entry name" value="RIBOSOMALS18"/>
</dbReference>
<dbReference type="SUPFAM" id="SSF46911">
    <property type="entry name" value="Ribosomal protein S18"/>
    <property type="match status" value="1"/>
</dbReference>
<dbReference type="PROSITE" id="PS00057">
    <property type="entry name" value="RIBOSOMAL_S18"/>
    <property type="match status" value="1"/>
</dbReference>
<accession>B2GJD6</accession>
<organism>
    <name type="scientific">Kocuria rhizophila (strain ATCC 9341 / DSM 348 / NBRC 103217 / DC2201)</name>
    <dbReference type="NCBI Taxonomy" id="378753"/>
    <lineage>
        <taxon>Bacteria</taxon>
        <taxon>Bacillati</taxon>
        <taxon>Actinomycetota</taxon>
        <taxon>Actinomycetes</taxon>
        <taxon>Micrococcales</taxon>
        <taxon>Micrococcaceae</taxon>
        <taxon>Kocuria</taxon>
    </lineage>
</organism>
<proteinExistence type="inferred from homology"/>
<keyword id="KW-1185">Reference proteome</keyword>
<keyword id="KW-0687">Ribonucleoprotein</keyword>
<keyword id="KW-0689">Ribosomal protein</keyword>
<keyword id="KW-0694">RNA-binding</keyword>
<keyword id="KW-0699">rRNA-binding</keyword>
<reference key="1">
    <citation type="journal article" date="2008" name="J. Bacteriol.">
        <title>Complete genome sequence of the soil actinomycete Kocuria rhizophila.</title>
        <authorList>
            <person name="Takarada H."/>
            <person name="Sekine M."/>
            <person name="Kosugi H."/>
            <person name="Matsuo Y."/>
            <person name="Fujisawa T."/>
            <person name="Omata S."/>
            <person name="Kishi E."/>
            <person name="Shimizu A."/>
            <person name="Tsukatani N."/>
            <person name="Tanikawa S."/>
            <person name="Fujita N."/>
            <person name="Harayama S."/>
        </authorList>
    </citation>
    <scope>NUCLEOTIDE SEQUENCE [LARGE SCALE GENOMIC DNA]</scope>
    <source>
        <strain>ATCC 9341 / DSM 348 / NBRC 103217 / DC2201</strain>
    </source>
</reference>
<protein>
    <recommendedName>
        <fullName evidence="1">Small ribosomal subunit protein bS18</fullName>
    </recommendedName>
    <alternativeName>
        <fullName evidence="2">30S ribosomal protein S18</fullName>
    </alternativeName>
</protein>
<sequence length="78" mass="8729">MAKAEIRKPKPKQNPLKAADVTEIDYKDVALLRKFISDRGKIRARRVTGVSVQEQRKIAQAIKNAREVALLPYSGAGR</sequence>
<comment type="function">
    <text evidence="1">Binds as a heterodimer with protein bS6 to the central domain of the 16S rRNA, where it helps stabilize the platform of the 30S subunit.</text>
</comment>
<comment type="subunit">
    <text evidence="1">Part of the 30S ribosomal subunit. Forms a tight heterodimer with protein bS6.</text>
</comment>
<comment type="similarity">
    <text evidence="1">Belongs to the bacterial ribosomal protein bS18 family.</text>
</comment>
<gene>
    <name evidence="1" type="primary">rpsR</name>
    <name type="ordered locus">KRH_23370</name>
</gene>
<evidence type="ECO:0000255" key="1">
    <source>
        <dbReference type="HAMAP-Rule" id="MF_00270"/>
    </source>
</evidence>
<evidence type="ECO:0000305" key="2"/>
<feature type="chain" id="PRO_0000345488" description="Small ribosomal subunit protein bS18">
    <location>
        <begin position="1"/>
        <end position="78"/>
    </location>
</feature>
<name>RS18_KOCRD</name>